<protein>
    <recommendedName>
        <fullName>Vitamin D3 receptor</fullName>
        <shortName>VDR</shortName>
    </recommendedName>
    <alternativeName>
        <fullName>1,25-dihydroxyvitamin D3 receptor</fullName>
    </alternativeName>
    <alternativeName>
        <fullName>Nuclear receptor subfamily 1 group I member 1</fullName>
    </alternativeName>
</protein>
<sequence length="426" mass="48318">MEATAASTSLPDPGDFDRNVPRICGVCGDRATGFHFNAMTCEGCKGFFRRSMKRKALFTCPFNGDCRITKDNRRHCQACRLKRCIDIGMMKEFILTDEEVQRKREMILKRKEEEALKDSLRPKLSEEQQRIITTLLEAHHKTYDDTYSDFSQFRPPVRNSEDEGNRPLRSILTPSFSGNSSSSCSDHCTSSPDTMEPTSFSNQDLNEEDSDDPSVTLDLSQLSMLPHLADLVSYSIQKVIGFAKMIPGFRDLTPEDQIVLLKSSAIEVIMLRSNQSFTLDDDMSWTCGSPDYKYQVSDVTRAGHSLELIEPLIKFQVGLKKLNLHEEEHVLLMAICIVSPDRPGVQDAALVEAIQDRLSNTLQTYIRCRHPPPGSHLLYAKMIQKLADLRSLNEEHSKQYRCLSFQPESSMKLTPLLFEVFGNEIS</sequence>
<organism>
    <name type="scientific">Bos taurus</name>
    <name type="common">Bovine</name>
    <dbReference type="NCBI Taxonomy" id="9913"/>
    <lineage>
        <taxon>Eukaryota</taxon>
        <taxon>Metazoa</taxon>
        <taxon>Chordata</taxon>
        <taxon>Craniata</taxon>
        <taxon>Vertebrata</taxon>
        <taxon>Euteleostomi</taxon>
        <taxon>Mammalia</taxon>
        <taxon>Eutheria</taxon>
        <taxon>Laurasiatheria</taxon>
        <taxon>Artiodactyla</taxon>
        <taxon>Ruminantia</taxon>
        <taxon>Pecora</taxon>
        <taxon>Bovidae</taxon>
        <taxon>Bovinae</taxon>
        <taxon>Bos</taxon>
    </lineage>
</organism>
<dbReference type="EMBL" id="AAFC03056593">
    <property type="status" value="NOT_ANNOTATED_CDS"/>
    <property type="molecule type" value="Genomic_DNA"/>
</dbReference>
<dbReference type="RefSeq" id="NP_001161404.1">
    <property type="nucleotide sequence ID" value="NM_001167932.1"/>
</dbReference>
<dbReference type="SMR" id="Q28037"/>
<dbReference type="FunCoup" id="Q28037">
    <property type="interactions" value="438"/>
</dbReference>
<dbReference type="STRING" id="9913.ENSBTAP00000063834"/>
<dbReference type="BindingDB" id="Q28037"/>
<dbReference type="ChEMBL" id="CHEMBL3452"/>
<dbReference type="DrugCentral" id="Q28037"/>
<dbReference type="PaxDb" id="9913-ENSBTAP00000021832"/>
<dbReference type="GeneID" id="533656"/>
<dbReference type="KEGG" id="bta:533656"/>
<dbReference type="CTD" id="7421"/>
<dbReference type="eggNOG" id="KOG3575">
    <property type="taxonomic scope" value="Eukaryota"/>
</dbReference>
<dbReference type="HOGENOM" id="CLU_007368_12_0_1"/>
<dbReference type="InParanoid" id="Q28037"/>
<dbReference type="OrthoDB" id="6352325at2759"/>
<dbReference type="PRO" id="PR:Q28037"/>
<dbReference type="Proteomes" id="UP000009136">
    <property type="component" value="Unplaced"/>
</dbReference>
<dbReference type="GO" id="GO:0005737">
    <property type="term" value="C:cytoplasm"/>
    <property type="evidence" value="ECO:0007669"/>
    <property type="project" value="UniProtKB-SubCell"/>
</dbReference>
<dbReference type="GO" id="GO:0005634">
    <property type="term" value="C:nucleus"/>
    <property type="evidence" value="ECO:0000318"/>
    <property type="project" value="GO_Central"/>
</dbReference>
<dbReference type="GO" id="GO:0004879">
    <property type="term" value="F:nuclear receptor activity"/>
    <property type="evidence" value="ECO:0000250"/>
    <property type="project" value="UniProtKB"/>
</dbReference>
<dbReference type="GO" id="GO:0000978">
    <property type="term" value="F:RNA polymerase II cis-regulatory region sequence-specific DNA binding"/>
    <property type="evidence" value="ECO:0000318"/>
    <property type="project" value="GO_Central"/>
</dbReference>
<dbReference type="GO" id="GO:0008270">
    <property type="term" value="F:zinc ion binding"/>
    <property type="evidence" value="ECO:0007669"/>
    <property type="project" value="UniProtKB-KW"/>
</dbReference>
<dbReference type="GO" id="GO:0030154">
    <property type="term" value="P:cell differentiation"/>
    <property type="evidence" value="ECO:0000318"/>
    <property type="project" value="GO_Central"/>
</dbReference>
<dbReference type="GO" id="GO:0030522">
    <property type="term" value="P:intracellular receptor signaling pathway"/>
    <property type="evidence" value="ECO:0000318"/>
    <property type="project" value="GO_Central"/>
</dbReference>
<dbReference type="GO" id="GO:0000122">
    <property type="term" value="P:negative regulation of transcription by RNA polymerase II"/>
    <property type="evidence" value="ECO:0000318"/>
    <property type="project" value="GO_Central"/>
</dbReference>
<dbReference type="GO" id="GO:0045944">
    <property type="term" value="P:positive regulation of transcription by RNA polymerase II"/>
    <property type="evidence" value="ECO:0000318"/>
    <property type="project" value="GO_Central"/>
</dbReference>
<dbReference type="GO" id="GO:0070561">
    <property type="term" value="P:vitamin D receptor signaling pathway"/>
    <property type="evidence" value="ECO:0000250"/>
    <property type="project" value="UniProtKB"/>
</dbReference>
<dbReference type="CDD" id="cd06955">
    <property type="entry name" value="NR_DBD_VDR"/>
    <property type="match status" value="1"/>
</dbReference>
<dbReference type="CDD" id="cd06933">
    <property type="entry name" value="NR_LBD_VDR"/>
    <property type="match status" value="1"/>
</dbReference>
<dbReference type="FunFam" id="3.30.50.10:FF:000023">
    <property type="entry name" value="Vitamin D3 receptor"/>
    <property type="match status" value="1"/>
</dbReference>
<dbReference type="FunFam" id="1.10.565.10:FF:000021">
    <property type="entry name" value="Vitamin D3 receptor B"/>
    <property type="match status" value="1"/>
</dbReference>
<dbReference type="Gene3D" id="3.30.50.10">
    <property type="entry name" value="Erythroid Transcription Factor GATA-1, subunit A"/>
    <property type="match status" value="1"/>
</dbReference>
<dbReference type="Gene3D" id="1.10.565.10">
    <property type="entry name" value="Retinoid X Receptor"/>
    <property type="match status" value="1"/>
</dbReference>
<dbReference type="InterPro" id="IPR042153">
    <property type="entry name" value="DBD_VDR"/>
</dbReference>
<dbReference type="InterPro" id="IPR035500">
    <property type="entry name" value="NHR-like_dom_sf"/>
</dbReference>
<dbReference type="InterPro" id="IPR000536">
    <property type="entry name" value="Nucl_hrmn_rcpt_lig-bd"/>
</dbReference>
<dbReference type="InterPro" id="IPR050234">
    <property type="entry name" value="Nuclear_hormone_rcpt_NR1"/>
</dbReference>
<dbReference type="InterPro" id="IPR001723">
    <property type="entry name" value="Nuclear_hrmn_rcpt"/>
</dbReference>
<dbReference type="InterPro" id="IPR000324">
    <property type="entry name" value="VitD_rcpt"/>
</dbReference>
<dbReference type="InterPro" id="IPR001628">
    <property type="entry name" value="Znf_hrmn_rcpt"/>
</dbReference>
<dbReference type="InterPro" id="IPR013088">
    <property type="entry name" value="Znf_NHR/GATA"/>
</dbReference>
<dbReference type="PANTHER" id="PTHR24082">
    <property type="entry name" value="NUCLEAR HORMONE RECEPTOR"/>
    <property type="match status" value="1"/>
</dbReference>
<dbReference type="PANTHER" id="PTHR24082:SF38">
    <property type="entry name" value="VITAMIN D3 RECEPTOR"/>
    <property type="match status" value="1"/>
</dbReference>
<dbReference type="Pfam" id="PF00104">
    <property type="entry name" value="Hormone_recep"/>
    <property type="match status" value="1"/>
</dbReference>
<dbReference type="Pfam" id="PF00105">
    <property type="entry name" value="zf-C4"/>
    <property type="match status" value="1"/>
</dbReference>
<dbReference type="PRINTS" id="PR00398">
    <property type="entry name" value="STRDHORMONER"/>
</dbReference>
<dbReference type="PRINTS" id="PR00047">
    <property type="entry name" value="STROIDFINGER"/>
</dbReference>
<dbReference type="PRINTS" id="PR00350">
    <property type="entry name" value="VITAMINDR"/>
</dbReference>
<dbReference type="SMART" id="SM00430">
    <property type="entry name" value="HOLI"/>
    <property type="match status" value="1"/>
</dbReference>
<dbReference type="SMART" id="SM00399">
    <property type="entry name" value="ZnF_C4"/>
    <property type="match status" value="1"/>
</dbReference>
<dbReference type="SUPFAM" id="SSF57716">
    <property type="entry name" value="Glucocorticoid receptor-like (DNA-binding domain)"/>
    <property type="match status" value="1"/>
</dbReference>
<dbReference type="SUPFAM" id="SSF48508">
    <property type="entry name" value="Nuclear receptor ligand-binding domain"/>
    <property type="match status" value="1"/>
</dbReference>
<dbReference type="PROSITE" id="PS51843">
    <property type="entry name" value="NR_LBD"/>
    <property type="match status" value="1"/>
</dbReference>
<dbReference type="PROSITE" id="PS00031">
    <property type="entry name" value="NUCLEAR_REC_DBD_1"/>
    <property type="match status" value="1"/>
</dbReference>
<dbReference type="PROSITE" id="PS51030">
    <property type="entry name" value="NUCLEAR_REC_DBD_2"/>
    <property type="match status" value="1"/>
</dbReference>
<accession>Q28037</accession>
<evidence type="ECO:0000250" key="1">
    <source>
        <dbReference type="UniProtKB" id="P11473"/>
    </source>
</evidence>
<evidence type="ECO:0000250" key="2">
    <source>
        <dbReference type="UniProtKB" id="P13053"/>
    </source>
</evidence>
<evidence type="ECO:0000250" key="3">
    <source>
        <dbReference type="UniProtKB" id="P48281"/>
    </source>
</evidence>
<evidence type="ECO:0000255" key="4">
    <source>
        <dbReference type="PROSITE-ProRule" id="PRU00407"/>
    </source>
</evidence>
<evidence type="ECO:0000255" key="5">
    <source>
        <dbReference type="PROSITE-ProRule" id="PRU01189"/>
    </source>
</evidence>
<evidence type="ECO:0000256" key="6">
    <source>
        <dbReference type="SAM" id="MobiDB-lite"/>
    </source>
</evidence>
<evidence type="ECO:0000269" key="7">
    <source>
    </source>
</evidence>
<evidence type="ECO:0000269" key="8">
    <source>
    </source>
</evidence>
<evidence type="ECO:0000305" key="9"/>
<reference key="1">
    <citation type="journal article" date="1996" name="J. Dairy Sci.">
        <title>Nucleotide sequence of the bovine vitamin D3 receptor.</title>
        <authorList>
            <person name="Neibergs H.L."/>
            <person name="Bosworth B.T."/>
            <person name="Reinhardt T.A."/>
        </authorList>
    </citation>
    <scope>PRELIMINARY NUCLEOTIDE SEQUENCE</scope>
</reference>
<reference key="2">
    <citation type="journal article" date="2009" name="Science">
        <title>The genome sequence of taurine cattle: a window to ruminant biology and evolution.</title>
        <authorList>
            <consortium name="The bovine genome sequencing and analysis consortium"/>
        </authorList>
    </citation>
    <scope>NUCLEOTIDE SEQUENCE [LARGE SCALE GENOMIC DNA]</scope>
    <source>
        <strain>Hereford</strain>
    </source>
</reference>
<reference key="3">
    <citation type="journal article" date="1980" name="Arch. Biochem. Biophys.">
        <title>Specific binding protein for 1,25-dihydroxyvitamin D3 in bovine mammary gland.</title>
        <authorList>
            <person name="Reinhardt T.A."/>
            <person name="Conrad H.R."/>
        </authorList>
    </citation>
    <scope>TISSUE SPECIFICITY</scope>
</reference>
<reference key="4">
    <citation type="journal article" date="1995" name="J. Dairy Sci.">
        <title>Milk fever and dietary cation-anion balance effects on concentration of vitamin D receptor in tissue of periparturient dairy cows.</title>
        <authorList>
            <person name="Goff J.P."/>
            <person name="Reinhardt T.A."/>
            <person name="Horst R.L."/>
        </authorList>
    </citation>
    <scope>TISSUE SPECIFICITY</scope>
</reference>
<proteinExistence type="evidence at transcript level"/>
<feature type="chain" id="PRO_0000053541" description="Vitamin D3 receptor">
    <location>
        <begin position="1"/>
        <end position="426"/>
    </location>
</feature>
<feature type="domain" description="NR LBD" evidence="5">
    <location>
        <begin position="127"/>
        <end position="422"/>
    </location>
</feature>
<feature type="DNA-binding region" description="Nuclear receptor" evidence="4">
    <location>
        <begin position="21"/>
        <end position="96"/>
    </location>
</feature>
<feature type="zinc finger region" description="NR C4-type" evidence="4">
    <location>
        <begin position="24"/>
        <end position="44"/>
    </location>
</feature>
<feature type="zinc finger region" description="NR C4-type" evidence="4">
    <location>
        <begin position="60"/>
        <end position="84"/>
    </location>
</feature>
<feature type="region of interest" description="Hinge" evidence="1">
    <location>
        <begin position="97"/>
        <end position="126"/>
    </location>
</feature>
<feature type="region of interest" description="Disordered" evidence="6">
    <location>
        <begin position="147"/>
        <end position="215"/>
    </location>
</feature>
<feature type="region of interest" description="Interaction with coactivator LXXLL motif" evidence="2">
    <location>
        <begin position="244"/>
        <end position="262"/>
    </location>
</feature>
<feature type="short sequence motif" description="9aaTAD" evidence="1">
    <location>
        <begin position="415"/>
        <end position="423"/>
    </location>
</feature>
<feature type="compositionally biased region" description="Low complexity" evidence="6">
    <location>
        <begin position="175"/>
        <end position="191"/>
    </location>
</feature>
<feature type="compositionally biased region" description="Polar residues" evidence="6">
    <location>
        <begin position="192"/>
        <end position="204"/>
    </location>
</feature>
<feature type="binding site" evidence="1">
    <location>
        <position position="24"/>
    </location>
    <ligand>
        <name>Zn(2+)</name>
        <dbReference type="ChEBI" id="CHEBI:29105"/>
        <label>1</label>
    </ligand>
</feature>
<feature type="binding site" evidence="1">
    <location>
        <position position="27"/>
    </location>
    <ligand>
        <name>Zn(2+)</name>
        <dbReference type="ChEBI" id="CHEBI:29105"/>
        <label>1</label>
    </ligand>
</feature>
<feature type="binding site" evidence="1">
    <location>
        <position position="41"/>
    </location>
    <ligand>
        <name>Zn(2+)</name>
        <dbReference type="ChEBI" id="CHEBI:29105"/>
        <label>1</label>
    </ligand>
</feature>
<feature type="binding site" evidence="1">
    <location>
        <position position="44"/>
    </location>
    <ligand>
        <name>Zn(2+)</name>
        <dbReference type="ChEBI" id="CHEBI:29105"/>
        <label>1</label>
    </ligand>
</feature>
<feature type="binding site" evidence="1">
    <location>
        <position position="60"/>
    </location>
    <ligand>
        <name>Zn(2+)</name>
        <dbReference type="ChEBI" id="CHEBI:29105"/>
        <label>2</label>
    </ligand>
</feature>
<feature type="binding site" evidence="1">
    <location>
        <position position="66"/>
    </location>
    <ligand>
        <name>Zn(2+)</name>
        <dbReference type="ChEBI" id="CHEBI:29105"/>
        <label>2</label>
    </ligand>
</feature>
<feature type="binding site" evidence="1">
    <location>
        <position position="76"/>
    </location>
    <ligand>
        <name>Zn(2+)</name>
        <dbReference type="ChEBI" id="CHEBI:29105"/>
        <label>2</label>
    </ligand>
</feature>
<feature type="binding site" evidence="1">
    <location>
        <position position="79"/>
    </location>
    <ligand>
        <name>Zn(2+)</name>
        <dbReference type="ChEBI" id="CHEBI:29105"/>
        <label>2</label>
    </ligand>
</feature>
<feature type="binding site" evidence="1">
    <location>
        <position position="143"/>
    </location>
    <ligand>
        <name>calcitriol</name>
        <dbReference type="ChEBI" id="CHEBI:17823"/>
    </ligand>
</feature>
<feature type="binding site" evidence="1">
    <location>
        <position position="235"/>
    </location>
    <ligand>
        <name>calcitriol</name>
        <dbReference type="ChEBI" id="CHEBI:17823"/>
    </ligand>
</feature>
<feature type="binding site" evidence="1">
    <location>
        <position position="272"/>
    </location>
    <ligand>
        <name>calcitriol</name>
        <dbReference type="ChEBI" id="CHEBI:17823"/>
    </ligand>
</feature>
<feature type="binding site" evidence="1">
    <location>
        <position position="276"/>
    </location>
    <ligand>
        <name>calcitriol</name>
        <dbReference type="ChEBI" id="CHEBI:17823"/>
    </ligand>
</feature>
<feature type="binding site" evidence="1">
    <location>
        <position position="304"/>
    </location>
    <ligand>
        <name>calcitriol</name>
        <dbReference type="ChEBI" id="CHEBI:17823"/>
    </ligand>
</feature>
<feature type="binding site" evidence="1">
    <location>
        <position position="396"/>
    </location>
    <ligand>
        <name>calcitriol</name>
        <dbReference type="ChEBI" id="CHEBI:17823"/>
    </ligand>
</feature>
<gene>
    <name type="primary">VDR</name>
    <name type="synonym">NR1I1</name>
</gene>
<comment type="function">
    <text evidence="1 2">Nuclear receptor for calcitriol, the active form of vitamin D3 which mediates the action of this vitamin on cells. Enters the nucleus upon vitamin D3 binding where it forms heterodimers with the retinoid X receptor/RXR. The VDR-RXR heterodimers bind to specific response elements on DNA and activate the transcription of vitamin D3-responsive target genes (By similarity). Plays a central role in calcium homeostasis (By similarity). Also functions as a receptor for the secondary bile acid lithocholic acid (LCA) and its metabolites (By similarity).</text>
</comment>
<comment type="subunit">
    <text evidence="1 3">Homodimer in the absence of bound vitamin D3. Heterodimer with RXRA after vitamin D3 binding. Interacts with MED1, NCOA1, NCOA2, NCOA3 and NCOA6 coactivators, leading to a strong increase of transcription of target genes. Interacts with the corepressor NCOR1. Interacts with SNW1. Interacts with IRX4, the interaction does not affect its transactivation activity (By similarity). Interacts with CRY1 (By similarity). Interacts with CRY2 in a ligand-dependent manner (By similarity).</text>
</comment>
<comment type="subcellular location">
    <subcellularLocation>
        <location evidence="1 4">Nucleus</location>
    </subcellularLocation>
    <subcellularLocation>
        <location evidence="1">Cytoplasm</location>
    </subcellularLocation>
    <text evidence="1">Localizes mainly to the nucleus. Translocated into the nucleus via both ligand-dependent and ligand-independent pathways; ligand-independent nuclear translocation is mediated by IPO4.</text>
</comment>
<comment type="tissue specificity">
    <text evidence="7 8">Mammary gland, expression increases during lactation. Also found in colon, expression is down-regulated at parturition.</text>
</comment>
<comment type="domain">
    <text evidence="1">Composed of three domains: a modulating N-terminal domain, a DNA-binding domain and a C-terminal ligand-binding domain.</text>
</comment>
<comment type="domain">
    <text evidence="1">The 9aaTAD motif is a transactivation domain present in a large number of yeast and animal transcription factors.</text>
</comment>
<comment type="PTM">
    <text evidence="1">Ubiquitinated by UBR5, leading to its degradation: UBR5 specifically recognizes and binds ligand-bound VDR when it is not associated with coactivators (NCOAs). In presence of NCOAs, the UBR5-degron is not accessible, preventing its ubiquitination and degradation.</text>
</comment>
<comment type="similarity">
    <text evidence="9">Belongs to the nuclear hormone receptor family. NR1 subfamily.</text>
</comment>
<keyword id="KW-0963">Cytoplasm</keyword>
<keyword id="KW-0238">DNA-binding</keyword>
<keyword id="KW-0479">Metal-binding</keyword>
<keyword id="KW-0539">Nucleus</keyword>
<keyword id="KW-0675">Receptor</keyword>
<keyword id="KW-1185">Reference proteome</keyword>
<keyword id="KW-0804">Transcription</keyword>
<keyword id="KW-0805">Transcription regulation</keyword>
<keyword id="KW-0832">Ubl conjugation</keyword>
<keyword id="KW-0862">Zinc</keyword>
<keyword id="KW-0863">Zinc-finger</keyword>
<name>VDR_BOVIN</name>